<reference key="1">
    <citation type="submission" date="2007-10" db="EMBL/GenBank/DDBJ databases">
        <title>Complete sequence of Methanococcus maripaludis C6.</title>
        <authorList>
            <consortium name="US DOE Joint Genome Institute"/>
            <person name="Copeland A."/>
            <person name="Lucas S."/>
            <person name="Lapidus A."/>
            <person name="Barry K."/>
            <person name="Glavina del Rio T."/>
            <person name="Dalin E."/>
            <person name="Tice H."/>
            <person name="Pitluck S."/>
            <person name="Clum A."/>
            <person name="Schmutz J."/>
            <person name="Larimer F."/>
            <person name="Land M."/>
            <person name="Hauser L."/>
            <person name="Kyrpides N."/>
            <person name="Mikhailova N."/>
            <person name="Sieprawska-Lupa M."/>
            <person name="Whitman W.B."/>
            <person name="Richardson P."/>
        </authorList>
    </citation>
    <scope>NUCLEOTIDE SEQUENCE [LARGE SCALE GENOMIC DNA]</scope>
    <source>
        <strain>C6 / ATCC BAA-1332</strain>
    </source>
</reference>
<dbReference type="EMBL" id="CP000867">
    <property type="protein sequence ID" value="ABX01519.1"/>
    <property type="molecule type" value="Genomic_DNA"/>
</dbReference>
<dbReference type="SMR" id="A9A846"/>
<dbReference type="STRING" id="444158.MmarC6_0702"/>
<dbReference type="KEGG" id="mmx:MmarC6_0702"/>
<dbReference type="eggNOG" id="arCOG00971">
    <property type="taxonomic scope" value="Archaea"/>
</dbReference>
<dbReference type="HOGENOM" id="CLU_035750_4_1_2"/>
<dbReference type="OrthoDB" id="9421at2157"/>
<dbReference type="PhylomeDB" id="A9A846"/>
<dbReference type="GO" id="GO:0005737">
    <property type="term" value="C:cytoplasm"/>
    <property type="evidence" value="ECO:0007669"/>
    <property type="project" value="UniProtKB-SubCell"/>
</dbReference>
<dbReference type="GO" id="GO:0019773">
    <property type="term" value="C:proteasome core complex, alpha-subunit complex"/>
    <property type="evidence" value="ECO:0000250"/>
    <property type="project" value="UniProtKB"/>
</dbReference>
<dbReference type="GO" id="GO:0004298">
    <property type="term" value="F:threonine-type endopeptidase activity"/>
    <property type="evidence" value="ECO:0007669"/>
    <property type="project" value="InterPro"/>
</dbReference>
<dbReference type="GO" id="GO:0010498">
    <property type="term" value="P:proteasomal protein catabolic process"/>
    <property type="evidence" value="ECO:0007669"/>
    <property type="project" value="UniProtKB-UniRule"/>
</dbReference>
<dbReference type="GO" id="GO:0006511">
    <property type="term" value="P:ubiquitin-dependent protein catabolic process"/>
    <property type="evidence" value="ECO:0007669"/>
    <property type="project" value="InterPro"/>
</dbReference>
<dbReference type="CDD" id="cd03756">
    <property type="entry name" value="proteasome_alpha_archeal"/>
    <property type="match status" value="1"/>
</dbReference>
<dbReference type="FunFam" id="3.60.20.10:FF:000004">
    <property type="entry name" value="Proteasome subunit alpha type-4"/>
    <property type="match status" value="1"/>
</dbReference>
<dbReference type="Gene3D" id="3.60.20.10">
    <property type="entry name" value="Glutamine Phosphoribosylpyrophosphate, subunit 1, domain 1"/>
    <property type="match status" value="1"/>
</dbReference>
<dbReference type="HAMAP" id="MF_00289_A">
    <property type="entry name" value="Proteasome_A_A"/>
    <property type="match status" value="1"/>
</dbReference>
<dbReference type="InterPro" id="IPR029055">
    <property type="entry name" value="Ntn_hydrolases_N"/>
</dbReference>
<dbReference type="InterPro" id="IPR050115">
    <property type="entry name" value="Proteasome_alpha"/>
</dbReference>
<dbReference type="InterPro" id="IPR023332">
    <property type="entry name" value="Proteasome_alpha-type"/>
</dbReference>
<dbReference type="InterPro" id="IPR019982">
    <property type="entry name" value="Proteasome_asu_arc"/>
</dbReference>
<dbReference type="InterPro" id="IPR000426">
    <property type="entry name" value="Proteasome_asu_N"/>
</dbReference>
<dbReference type="InterPro" id="IPR001353">
    <property type="entry name" value="Proteasome_sua/b"/>
</dbReference>
<dbReference type="NCBIfam" id="TIGR03633">
    <property type="entry name" value="arc_protsome_A"/>
    <property type="match status" value="1"/>
</dbReference>
<dbReference type="NCBIfam" id="NF003075">
    <property type="entry name" value="PRK03996.1"/>
    <property type="match status" value="1"/>
</dbReference>
<dbReference type="PANTHER" id="PTHR11599">
    <property type="entry name" value="PROTEASOME SUBUNIT ALPHA/BETA"/>
    <property type="match status" value="1"/>
</dbReference>
<dbReference type="Pfam" id="PF00227">
    <property type="entry name" value="Proteasome"/>
    <property type="match status" value="1"/>
</dbReference>
<dbReference type="Pfam" id="PF10584">
    <property type="entry name" value="Proteasome_A_N"/>
    <property type="match status" value="1"/>
</dbReference>
<dbReference type="SMART" id="SM00948">
    <property type="entry name" value="Proteasome_A_N"/>
    <property type="match status" value="1"/>
</dbReference>
<dbReference type="SUPFAM" id="SSF56235">
    <property type="entry name" value="N-terminal nucleophile aminohydrolases (Ntn hydrolases)"/>
    <property type="match status" value="1"/>
</dbReference>
<dbReference type="PROSITE" id="PS00388">
    <property type="entry name" value="PROTEASOME_ALPHA_1"/>
    <property type="match status" value="1"/>
</dbReference>
<dbReference type="PROSITE" id="PS51475">
    <property type="entry name" value="PROTEASOME_ALPHA_2"/>
    <property type="match status" value="1"/>
</dbReference>
<proteinExistence type="inferred from homology"/>
<gene>
    <name evidence="1" type="primary">psmA</name>
    <name type="ordered locus">MmarC6_0702</name>
</gene>
<protein>
    <recommendedName>
        <fullName evidence="1">Proteasome subunit alpha</fullName>
    </recommendedName>
    <alternativeName>
        <fullName evidence="1">20S proteasome alpha subunit</fullName>
    </alternativeName>
    <alternativeName>
        <fullName evidence="1">Proteasome core protein PsmA</fullName>
    </alternativeName>
</protein>
<organism>
    <name type="scientific">Methanococcus maripaludis (strain C6 / ATCC BAA-1332)</name>
    <dbReference type="NCBI Taxonomy" id="444158"/>
    <lineage>
        <taxon>Archaea</taxon>
        <taxon>Methanobacteriati</taxon>
        <taxon>Methanobacteriota</taxon>
        <taxon>Methanomada group</taxon>
        <taxon>Methanococci</taxon>
        <taxon>Methanococcales</taxon>
        <taxon>Methanococcaceae</taxon>
        <taxon>Methanococcus</taxon>
    </lineage>
</organism>
<keyword id="KW-0963">Cytoplasm</keyword>
<keyword id="KW-0647">Proteasome</keyword>
<name>PSA_METM6</name>
<sequence length="259" mass="28522">MQQMVPASGYDRAITIFSPEGRLYQVEYAREAVRRGTTAVGIKCNDGVVLAVDRRITSKLIDVSSIEKIFQIDDHIVAATSGLVADARVLIDRARLEAQMNRISYGEAITVEALAKKICDIKQAYTQHGGARPFGLALLITGIDRHSARLFETDPSGALIEYKATAIGSGRPIAMEVLESKYDENMIVSEGMELALYALSKTTEELKPENIDMAIVKDSGKLVEKISVDEIEKIVKAVYKKVEAEEAEAEKNKVEEDIE</sequence>
<evidence type="ECO:0000255" key="1">
    <source>
        <dbReference type="HAMAP-Rule" id="MF_00289"/>
    </source>
</evidence>
<accession>A9A846</accession>
<feature type="chain" id="PRO_1000114973" description="Proteasome subunit alpha">
    <location>
        <begin position="1"/>
        <end position="259"/>
    </location>
</feature>
<comment type="function">
    <text evidence="1">Component of the proteasome core, a large protease complex with broad specificity involved in protein degradation.</text>
</comment>
<comment type="activity regulation">
    <text evidence="1">The formation of the proteasomal ATPase PAN-20S proteasome complex, via the docking of the C-termini of PAN into the intersubunit pockets in the alpha-rings, triggers opening of the gate for substrate entry. Interconversion between the open-gate and close-gate conformations leads to a dynamic regulation of the 20S proteasome proteolysis activity.</text>
</comment>
<comment type="subunit">
    <text evidence="1">The 20S proteasome core is composed of 14 alpha and 14 beta subunits that assemble into four stacked heptameric rings, resulting in a barrel-shaped structure. The two inner rings, each composed of seven catalytic beta subunits, are sandwiched by two outer rings, each composed of seven alpha subunits. The catalytic chamber with the active sites is on the inside of the barrel. Has a gated structure, the ends of the cylinder being occluded by the N-termini of the alpha-subunits. Is capped at one or both ends by the proteasome regulatory ATPase, PAN.</text>
</comment>
<comment type="subcellular location">
    <subcellularLocation>
        <location evidence="1">Cytoplasm</location>
    </subcellularLocation>
</comment>
<comment type="similarity">
    <text evidence="1">Belongs to the peptidase T1A family.</text>
</comment>